<protein>
    <recommendedName>
        <fullName evidence="1">Glycogen synthase</fullName>
        <ecNumber evidence="1">2.4.1.21</ecNumber>
    </recommendedName>
    <alternativeName>
        <fullName evidence="1">Starch [bacterial glycogen] synthase</fullName>
    </alternativeName>
</protein>
<sequence length="476" mass="52927">MKILHVCSELYPLLKTGGLADVLGALPQAQNQIGLDARVLLPAYPAITAGIQNTQVVAEFDNFAGHVVLRYGEYNDVGIYLIDAPHLYGREGNPYHDAYYNDYGDNYKRFALLGWVGAELATGLDNWWRAEVVHAHDWHAGLCAAYLFNKGKPAKSVFTIHNLAYQGQFSYHHLYEIGLPTGMFHVEGLELFGQISYLKSGLFYSDASTAVSPTYAQEITTPEFAYGLQGLLSGLKAQGRLVGILNGVDENIWHPNVDQYIPHHYKLKYMAGKKKNKAELQAYFNLPQDESALAFVMVTRLTEQKGVDLLIESADEIVKQGGQLMILGSGAPHLEQGIRELAAQYPENIAVKIGYDEALSHLMVAGGDVILVPSRFEPCGLTQLYGLQYGTLPLVRKTGGLADTVVDSASESIKARTATGFVFENATPEALRHCLQRAFALWQKPRAWTMVRTDAMEQDFSWRKAAEQYRTLYERL</sequence>
<dbReference type="EC" id="2.4.1.21" evidence="1"/>
<dbReference type="EMBL" id="CP000671">
    <property type="protein sequence ID" value="ABQ98269.1"/>
    <property type="molecule type" value="Genomic_DNA"/>
</dbReference>
<dbReference type="SMR" id="A5UBW8"/>
<dbReference type="CAZy" id="GT5">
    <property type="family name" value="Glycosyltransferase Family 5"/>
</dbReference>
<dbReference type="KEGG" id="hip:CGSHiEE_04330"/>
<dbReference type="HOGENOM" id="CLU_009583_18_4_6"/>
<dbReference type="UniPathway" id="UPA00164"/>
<dbReference type="GO" id="GO:0005829">
    <property type="term" value="C:cytosol"/>
    <property type="evidence" value="ECO:0007669"/>
    <property type="project" value="TreeGrafter"/>
</dbReference>
<dbReference type="GO" id="GO:0009011">
    <property type="term" value="F:alpha-1,4-glucan glucosyltransferase (ADP-glucose donor) activity"/>
    <property type="evidence" value="ECO:0007669"/>
    <property type="project" value="UniProtKB-UniRule"/>
</dbReference>
<dbReference type="GO" id="GO:0004373">
    <property type="term" value="F:alpha-1,4-glucan glucosyltransferase (UDP-glucose donor) activity"/>
    <property type="evidence" value="ECO:0007669"/>
    <property type="project" value="InterPro"/>
</dbReference>
<dbReference type="GO" id="GO:0005978">
    <property type="term" value="P:glycogen biosynthetic process"/>
    <property type="evidence" value="ECO:0007669"/>
    <property type="project" value="UniProtKB-UniRule"/>
</dbReference>
<dbReference type="CDD" id="cd03791">
    <property type="entry name" value="GT5_Glycogen_synthase_DULL1-like"/>
    <property type="match status" value="1"/>
</dbReference>
<dbReference type="FunFam" id="3.40.50.2000:FF:000011">
    <property type="entry name" value="Glycogen synthase"/>
    <property type="match status" value="1"/>
</dbReference>
<dbReference type="Gene3D" id="3.40.50.2000">
    <property type="entry name" value="Glycogen Phosphorylase B"/>
    <property type="match status" value="2"/>
</dbReference>
<dbReference type="HAMAP" id="MF_00484">
    <property type="entry name" value="Glycogen_synth"/>
    <property type="match status" value="1"/>
</dbReference>
<dbReference type="InterPro" id="IPR001296">
    <property type="entry name" value="Glyco_trans_1"/>
</dbReference>
<dbReference type="InterPro" id="IPR011835">
    <property type="entry name" value="GS/SS"/>
</dbReference>
<dbReference type="InterPro" id="IPR013534">
    <property type="entry name" value="Starch_synth_cat_dom"/>
</dbReference>
<dbReference type="NCBIfam" id="TIGR02095">
    <property type="entry name" value="glgA"/>
    <property type="match status" value="1"/>
</dbReference>
<dbReference type="NCBIfam" id="NF001899">
    <property type="entry name" value="PRK00654.1-2"/>
    <property type="match status" value="1"/>
</dbReference>
<dbReference type="PANTHER" id="PTHR45825:SF11">
    <property type="entry name" value="ALPHA AMYLASE DOMAIN-CONTAINING PROTEIN"/>
    <property type="match status" value="1"/>
</dbReference>
<dbReference type="PANTHER" id="PTHR45825">
    <property type="entry name" value="GRANULE-BOUND STARCH SYNTHASE 1, CHLOROPLASTIC/AMYLOPLASTIC"/>
    <property type="match status" value="1"/>
</dbReference>
<dbReference type="Pfam" id="PF08323">
    <property type="entry name" value="Glyco_transf_5"/>
    <property type="match status" value="1"/>
</dbReference>
<dbReference type="Pfam" id="PF00534">
    <property type="entry name" value="Glycos_transf_1"/>
    <property type="match status" value="1"/>
</dbReference>
<dbReference type="SUPFAM" id="SSF53756">
    <property type="entry name" value="UDP-Glycosyltransferase/glycogen phosphorylase"/>
    <property type="match status" value="1"/>
</dbReference>
<comment type="function">
    <text evidence="1">Synthesizes alpha-1,4-glucan chains using ADP-glucose.</text>
</comment>
<comment type="catalytic activity">
    <reaction evidence="1">
        <text>[(1-&gt;4)-alpha-D-glucosyl](n) + ADP-alpha-D-glucose = [(1-&gt;4)-alpha-D-glucosyl](n+1) + ADP + H(+)</text>
        <dbReference type="Rhea" id="RHEA:18189"/>
        <dbReference type="Rhea" id="RHEA-COMP:9584"/>
        <dbReference type="Rhea" id="RHEA-COMP:9587"/>
        <dbReference type="ChEBI" id="CHEBI:15378"/>
        <dbReference type="ChEBI" id="CHEBI:15444"/>
        <dbReference type="ChEBI" id="CHEBI:57498"/>
        <dbReference type="ChEBI" id="CHEBI:456216"/>
        <dbReference type="EC" id="2.4.1.21"/>
    </reaction>
</comment>
<comment type="pathway">
    <text evidence="1">Glycan biosynthesis; glycogen biosynthesis.</text>
</comment>
<comment type="similarity">
    <text evidence="1">Belongs to the glycosyltransferase 1 family. Bacterial/plant glycogen synthase subfamily.</text>
</comment>
<keyword id="KW-0320">Glycogen biosynthesis</keyword>
<keyword id="KW-0328">Glycosyltransferase</keyword>
<keyword id="KW-0808">Transferase</keyword>
<organism>
    <name type="scientific">Haemophilus influenzae (strain PittEE)</name>
    <dbReference type="NCBI Taxonomy" id="374930"/>
    <lineage>
        <taxon>Bacteria</taxon>
        <taxon>Pseudomonadati</taxon>
        <taxon>Pseudomonadota</taxon>
        <taxon>Gammaproteobacteria</taxon>
        <taxon>Pasteurellales</taxon>
        <taxon>Pasteurellaceae</taxon>
        <taxon>Haemophilus</taxon>
    </lineage>
</organism>
<proteinExistence type="inferred from homology"/>
<accession>A5UBW8</accession>
<feature type="chain" id="PRO_1000014362" description="Glycogen synthase">
    <location>
        <begin position="1"/>
        <end position="476"/>
    </location>
</feature>
<feature type="binding site" evidence="1">
    <location>
        <position position="15"/>
    </location>
    <ligand>
        <name>ADP-alpha-D-glucose</name>
        <dbReference type="ChEBI" id="CHEBI:57498"/>
    </ligand>
</feature>
<name>GLGA_HAEIE</name>
<reference key="1">
    <citation type="journal article" date="2007" name="Genome Biol.">
        <title>Characterization and modeling of the Haemophilus influenzae core and supragenomes based on the complete genomic sequences of Rd and 12 clinical nontypeable strains.</title>
        <authorList>
            <person name="Hogg J.S."/>
            <person name="Hu F.Z."/>
            <person name="Janto B."/>
            <person name="Boissy R."/>
            <person name="Hayes J."/>
            <person name="Keefe R."/>
            <person name="Post J.C."/>
            <person name="Ehrlich G.D."/>
        </authorList>
    </citation>
    <scope>NUCLEOTIDE SEQUENCE [LARGE SCALE GENOMIC DNA]</scope>
    <source>
        <strain>PittEE</strain>
    </source>
</reference>
<evidence type="ECO:0000255" key="1">
    <source>
        <dbReference type="HAMAP-Rule" id="MF_00484"/>
    </source>
</evidence>
<gene>
    <name evidence="1" type="primary">glgA</name>
    <name type="ordered locus">CGSHiEE_04330</name>
</gene>